<protein>
    <recommendedName>
        <fullName>Transposon Ty1-H Gag polyprotein</fullName>
    </recommendedName>
    <alternativeName>
        <fullName>Gag-p49</fullName>
    </alternativeName>
    <alternativeName>
        <fullName>Transposon Ty1 protein A</fullName>
        <shortName>TY1A</shortName>
        <shortName>TYA</shortName>
    </alternativeName>
    <alternativeName>
        <fullName>p58</fullName>
    </alternativeName>
    <component>
        <recommendedName>
            <fullName>Capsid protein</fullName>
            <shortName>CA</shortName>
        </recommendedName>
        <alternativeName>
            <fullName>Gag-p45</fullName>
        </alternativeName>
        <alternativeName>
            <fullName>p54</fullName>
        </alternativeName>
    </component>
    <component>
        <recommendedName>
            <fullName>Gag-p4</fullName>
        </recommendedName>
    </component>
</protein>
<dbReference type="EMBL" id="U00029">
    <property type="status" value="NOT_ANNOTATED_CDS"/>
    <property type="molecule type" value="Genomic_DNA"/>
</dbReference>
<dbReference type="EMBL" id="BK006934">
    <property type="protein sequence ID" value="DAA06911.1"/>
    <property type="molecule type" value="Genomic_DNA"/>
</dbReference>
<dbReference type="PIR" id="S52602">
    <property type="entry name" value="S52602"/>
</dbReference>
<dbReference type="RefSeq" id="NP_036195.3">
    <molecule id="P0C2I4-1"/>
    <property type="nucleotide sequence ID" value="NM_001184437.3"/>
</dbReference>
<dbReference type="SMR" id="P0C2I4"/>
<dbReference type="BioGRID" id="36649">
    <property type="interactions" value="15"/>
</dbReference>
<dbReference type="FunCoup" id="P0C2I4">
    <property type="interactions" value="40"/>
</dbReference>
<dbReference type="GlyGen" id="P0C2I4">
    <property type="glycosylation" value="2 sites"/>
</dbReference>
<dbReference type="PaxDb" id="4932-YHR214C-C"/>
<dbReference type="PeptideAtlas" id="P0C2I4"/>
<dbReference type="GeneID" id="856624"/>
<dbReference type="KEGG" id="sce:YHR214C-C"/>
<dbReference type="AGR" id="SGD:S000007421"/>
<dbReference type="SGD" id="S000007421">
    <property type="gene designation" value="YHR214C-C"/>
</dbReference>
<dbReference type="VEuPathDB" id="FungiDB:YHR214C-C"/>
<dbReference type="eggNOG" id="KOG0017">
    <property type="taxonomic scope" value="Eukaryota"/>
</dbReference>
<dbReference type="HOGENOM" id="CLU_045291_1_0_1"/>
<dbReference type="InParanoid" id="P0C2I4"/>
<dbReference type="OrthoDB" id="5423336at2759"/>
<dbReference type="Proteomes" id="UP000002311">
    <property type="component" value="Chromosome VIII"/>
</dbReference>
<dbReference type="RNAct" id="P0C2I4">
    <property type="molecule type" value="protein"/>
</dbReference>
<dbReference type="GO" id="GO:0005737">
    <property type="term" value="C:cytoplasm"/>
    <property type="evidence" value="ECO:0007669"/>
    <property type="project" value="UniProtKB-SubCell"/>
</dbReference>
<dbReference type="GO" id="GO:0003723">
    <property type="term" value="F:RNA binding"/>
    <property type="evidence" value="ECO:0007669"/>
    <property type="project" value="UniProtKB-KW"/>
</dbReference>
<dbReference type="GO" id="GO:0075523">
    <property type="term" value="P:viral translational frameshifting"/>
    <property type="evidence" value="ECO:0007669"/>
    <property type="project" value="UniProtKB-KW"/>
</dbReference>
<dbReference type="InterPro" id="IPR015820">
    <property type="entry name" value="TYA"/>
</dbReference>
<dbReference type="Pfam" id="PF01021">
    <property type="entry name" value="TYA"/>
    <property type="match status" value="2"/>
</dbReference>
<comment type="function">
    <text evidence="1">Capsid protein (CA) is the structural component of the virus-like particle (VLP), forming the shell that encapsulates the retrotransposons dimeric RNA genome. The particles are assembled from trimer-clustered units and there are holes in the capsid shells that allow for the diffusion of macromolecules. CA also has nucleocapsid-like chaperone activity, promoting primer tRNA(i)-Met annealing to the multipartite primer-binding site (PBS), dimerization of Ty1 RNA and initiation of reverse transcription (By similarity).</text>
</comment>
<comment type="subunit">
    <text evidence="1">Homotrimer.</text>
</comment>
<comment type="subcellular location">
    <subcellularLocation>
        <location evidence="1">Cytoplasm</location>
    </subcellularLocation>
</comment>
<comment type="alternative products">
    <event type="ribosomal frameshifting"/>
    <isoform>
        <id>P0C2I4-1</id>
        <name>Transposon Ty1-H Gag polyprotein</name>
        <sequence type="displayed"/>
    </isoform>
    <isoform>
        <id>O13535-1</id>
        <name>Transposon Ty1-H Gag-Pol polyprotein</name>
        <sequence type="external"/>
    </isoform>
    <text evidence="1">The Gag-Pol polyprotein is generated by a +1 ribosomal frameshift. The ratio of Gag:Gag-Pol varies between 20:1 and 5:1 (By similarity).</text>
</comment>
<comment type="domain">
    <text evidence="1">The C-terminal RNA-binding region of CA is sufficient for all its nucleocapsid-like chaperone activities.</text>
</comment>
<comment type="miscellaneous">
    <text>Retrotransposons are mobile genetic entities that are able to replicate via an RNA intermediate and a reverse transcription step. In contrast to retroviruses, retrotransposons are non-infectious, lack an envelope and remain intracellular. Ty1 retrotransposons belong to the copia elements (pseudoviridae).</text>
</comment>
<comment type="miscellaneous">
    <molecule>Isoform Transposon Ty1-H Gag polyprotein</molecule>
    <text>Produced by conventional translation.</text>
</comment>
<proteinExistence type="inferred from homology"/>
<keyword id="KW-0963">Cytoplasm</keyword>
<keyword id="KW-1185">Reference proteome</keyword>
<keyword id="KW-0688">Ribosomal frameshifting</keyword>
<keyword id="KW-0694">RNA-binding</keyword>
<keyword id="KW-0814">Transposable element</keyword>
<accession>P0C2I4</accession>
<accession>D3DLG7</accession>
<gene>
    <name type="primary">TY1A-H</name>
    <name type="synonym">YHRCTy1-1 GAG</name>
    <name type="ordered locus">YHR214C-C</name>
    <name type="ORF">YHR214C-A</name>
</gene>
<organism>
    <name type="scientific">Saccharomyces cerevisiae (strain ATCC 204508 / S288c)</name>
    <name type="common">Baker's yeast</name>
    <dbReference type="NCBI Taxonomy" id="559292"/>
    <lineage>
        <taxon>Eukaryota</taxon>
        <taxon>Fungi</taxon>
        <taxon>Dikarya</taxon>
        <taxon>Ascomycota</taxon>
        <taxon>Saccharomycotina</taxon>
        <taxon>Saccharomycetes</taxon>
        <taxon>Saccharomycetales</taxon>
        <taxon>Saccharomycetaceae</taxon>
        <taxon>Saccharomyces</taxon>
    </lineage>
</organism>
<evidence type="ECO:0000250" key="1"/>
<evidence type="ECO:0000256" key="2">
    <source>
        <dbReference type="SAM" id="MobiDB-lite"/>
    </source>
</evidence>
<reference key="1">
    <citation type="journal article" date="1994" name="Science">
        <title>Complete nucleotide sequence of Saccharomyces cerevisiae chromosome VIII.</title>
        <authorList>
            <person name="Johnston M."/>
            <person name="Andrews S."/>
            <person name="Brinkman R."/>
            <person name="Cooper J."/>
            <person name="Ding H."/>
            <person name="Dover J."/>
            <person name="Du Z."/>
            <person name="Favello A."/>
            <person name="Fulton L."/>
            <person name="Gattung S."/>
            <person name="Geisel C."/>
            <person name="Kirsten J."/>
            <person name="Kucaba T."/>
            <person name="Hillier L.W."/>
            <person name="Jier M."/>
            <person name="Johnston L."/>
            <person name="Langston Y."/>
            <person name="Latreille P."/>
            <person name="Louis E.J."/>
            <person name="Macri C."/>
            <person name="Mardis E."/>
            <person name="Menezes S."/>
            <person name="Mouser L."/>
            <person name="Nhan M."/>
            <person name="Rifkin L."/>
            <person name="Riles L."/>
            <person name="St Peter H."/>
            <person name="Trevaskis E."/>
            <person name="Vaughan K."/>
            <person name="Vignati D."/>
            <person name="Wilcox L."/>
            <person name="Wohldman P."/>
            <person name="Waterston R."/>
            <person name="Wilson R."/>
            <person name="Vaudin M."/>
        </authorList>
    </citation>
    <scope>NUCLEOTIDE SEQUENCE [LARGE SCALE GENOMIC DNA]</scope>
    <source>
        <strain>ATCC 204508 / S288c</strain>
    </source>
</reference>
<reference key="2">
    <citation type="journal article" date="2014" name="G3 (Bethesda)">
        <title>The reference genome sequence of Saccharomyces cerevisiae: Then and now.</title>
        <authorList>
            <person name="Engel S.R."/>
            <person name="Dietrich F.S."/>
            <person name="Fisk D.G."/>
            <person name="Binkley G."/>
            <person name="Balakrishnan R."/>
            <person name="Costanzo M.C."/>
            <person name="Dwight S.S."/>
            <person name="Hitz B.C."/>
            <person name="Karra K."/>
            <person name="Nash R.S."/>
            <person name="Weng S."/>
            <person name="Wong E.D."/>
            <person name="Lloyd P."/>
            <person name="Skrzypek M.S."/>
            <person name="Miyasato S.R."/>
            <person name="Simison M."/>
            <person name="Cherry J.M."/>
        </authorList>
    </citation>
    <scope>GENOME REANNOTATION</scope>
    <source>
        <strain>ATCC 204508 / S288c</strain>
    </source>
</reference>
<reference key="3">
    <citation type="journal article" date="1998" name="Genome Res.">
        <title>Transposable elements and genome organization: a comprehensive survey of retrotransposons revealed by the complete Saccharomyces cerevisiae genome sequence.</title>
        <authorList>
            <person name="Kim J.M."/>
            <person name="Vanguri S."/>
            <person name="Boeke J.D."/>
            <person name="Gabriel A."/>
            <person name="Voytas D.F."/>
        </authorList>
    </citation>
    <scope>NOMENCLATURE</scope>
</reference>
<reference key="4">
    <citation type="journal article" date="2005" name="Cytogenet. Genome Res.">
        <title>Happy together: the life and times of Ty retrotransposons and their hosts.</title>
        <authorList>
            <person name="Lesage P."/>
            <person name="Todeschini A.L."/>
        </authorList>
    </citation>
    <scope>REVIEW</scope>
</reference>
<sequence>MESQQLSNYPHISHGSACASVTSKEVHTNQDPLDVSASKIQEYDKASTKANSQQTTTPASSAVPENLHHASPQPASVPPPQNGPYPQQCMMTQNQANPSGWSFYGHPSMIPYTPYQMSPMYFPPGPQSQFPQYPSSVGTPLSTPSPESGNTFTDSSSADSDMTSTKKYVRPPPMLTSPNDFPNWVKTYIKFLQNSNLGGIIPTVNGKPVPPMLTSPNDFPNWVKTYIKFLQNSNLGGIIPTVNGKPVRQITDDELTFLYNTFQIFAPSQFLPTWVKDILSVDYTDIMKILSKSIEKMQSDTQEANDIVTLANLQYNGSTPADAFETKVTNIIDRLNNNGIHINNKVACQLIMRGLSGEYKFLRYTRHRHLNMTVAELFLDIHAIYEEQQGSRNSKPNYRRNPSDEKNDSRSYTNTTKPKVIARNPQKTNNSKSKTARAHNVSTSNNSPSTDNDSISKSTTEPIQLNNKHDLHLRPETY</sequence>
<feature type="chain" id="PRO_0000279079" description="Transposon Ty1-H Gag polyprotein">
    <location>
        <begin position="1"/>
        <end position="478"/>
    </location>
</feature>
<feature type="chain" id="PRO_0000279080" description="Capsid protein" evidence="1">
    <location>
        <begin position="1"/>
        <end position="439"/>
    </location>
</feature>
<feature type="peptide" id="PRO_0000279081" description="Gag-p4" evidence="1">
    <location>
        <begin position="440"/>
        <end position="478"/>
    </location>
</feature>
<feature type="region of interest" description="Disordered" evidence="2">
    <location>
        <begin position="1"/>
        <end position="84"/>
    </location>
</feature>
<feature type="region of interest" description="Disordered" evidence="2">
    <location>
        <begin position="126"/>
        <end position="174"/>
    </location>
</feature>
<feature type="region of interest" description="RNA-binding" evidence="1">
    <location>
        <begin position="337"/>
        <end position="439"/>
    </location>
</feature>
<feature type="region of interest" description="Disordered" evidence="2">
    <location>
        <begin position="390"/>
        <end position="478"/>
    </location>
</feature>
<feature type="compositionally biased region" description="Polar residues" evidence="2">
    <location>
        <begin position="1"/>
        <end position="10"/>
    </location>
</feature>
<feature type="compositionally biased region" description="Polar residues" evidence="2">
    <location>
        <begin position="48"/>
        <end position="60"/>
    </location>
</feature>
<feature type="compositionally biased region" description="Polar residues" evidence="2">
    <location>
        <begin position="127"/>
        <end position="152"/>
    </location>
</feature>
<feature type="compositionally biased region" description="Low complexity" evidence="2">
    <location>
        <begin position="153"/>
        <end position="165"/>
    </location>
</feature>
<feature type="compositionally biased region" description="Low complexity" evidence="2">
    <location>
        <begin position="440"/>
        <end position="456"/>
    </location>
</feature>
<feature type="compositionally biased region" description="Polar residues" evidence="2">
    <location>
        <begin position="457"/>
        <end position="466"/>
    </location>
</feature>
<feature type="compositionally biased region" description="Basic and acidic residues" evidence="2">
    <location>
        <begin position="467"/>
        <end position="478"/>
    </location>
</feature>
<feature type="site" description="Cleavage; by Ty1 protease" evidence="1">
    <location>
        <begin position="439"/>
        <end position="440"/>
    </location>
</feature>
<name>YH11A_YEAST</name>